<proteinExistence type="inferred from homology"/>
<reference key="1">
    <citation type="journal article" date="2005" name="Genome Res.">
        <title>The Chlamydophila abortus genome sequence reveals an array of variable proteins that contribute to interspecies variation.</title>
        <authorList>
            <person name="Thomson N.R."/>
            <person name="Yeats C."/>
            <person name="Bell K."/>
            <person name="Holden M.T.G."/>
            <person name="Bentley S.D."/>
            <person name="Livingstone M."/>
            <person name="Cerdeno-Tarraga A.-M."/>
            <person name="Harris B."/>
            <person name="Doggett J."/>
            <person name="Ormond D."/>
            <person name="Mungall K."/>
            <person name="Clarke K."/>
            <person name="Feltwell T."/>
            <person name="Hance Z."/>
            <person name="Sanders M."/>
            <person name="Quail M.A."/>
            <person name="Price C."/>
            <person name="Barrell B.G."/>
            <person name="Parkhill J."/>
            <person name="Longbottom D."/>
        </authorList>
    </citation>
    <scope>NUCLEOTIDE SEQUENCE [LARGE SCALE GENOMIC DNA]</scope>
    <source>
        <strain>DSM 27085 / S26/3</strain>
    </source>
</reference>
<feature type="chain" id="PRO_1000011598" description="GTPase Der">
    <location>
        <begin position="1"/>
        <end position="474"/>
    </location>
</feature>
<feature type="domain" description="EngA-type G 1">
    <location>
        <begin position="2"/>
        <end position="166"/>
    </location>
</feature>
<feature type="domain" description="EngA-type G 2">
    <location>
        <begin position="212"/>
        <end position="385"/>
    </location>
</feature>
<feature type="domain" description="KH-like" evidence="1">
    <location>
        <begin position="386"/>
        <end position="470"/>
    </location>
</feature>
<feature type="binding site" evidence="1">
    <location>
        <begin position="8"/>
        <end position="15"/>
    </location>
    <ligand>
        <name>GTP</name>
        <dbReference type="ChEBI" id="CHEBI:37565"/>
        <label>1</label>
    </ligand>
</feature>
<feature type="binding site" evidence="1">
    <location>
        <begin position="55"/>
        <end position="59"/>
    </location>
    <ligand>
        <name>GTP</name>
        <dbReference type="ChEBI" id="CHEBI:37565"/>
        <label>1</label>
    </ligand>
</feature>
<feature type="binding site" evidence="1">
    <location>
        <begin position="118"/>
        <end position="121"/>
    </location>
    <ligand>
        <name>GTP</name>
        <dbReference type="ChEBI" id="CHEBI:37565"/>
        <label>1</label>
    </ligand>
</feature>
<feature type="binding site" evidence="1">
    <location>
        <begin position="218"/>
        <end position="225"/>
    </location>
    <ligand>
        <name>GTP</name>
        <dbReference type="ChEBI" id="CHEBI:37565"/>
        <label>2</label>
    </ligand>
</feature>
<feature type="binding site" evidence="1">
    <location>
        <begin position="265"/>
        <end position="269"/>
    </location>
    <ligand>
        <name>GTP</name>
        <dbReference type="ChEBI" id="CHEBI:37565"/>
        <label>2</label>
    </ligand>
</feature>
<feature type="binding site" evidence="1">
    <location>
        <begin position="330"/>
        <end position="333"/>
    </location>
    <ligand>
        <name>GTP</name>
        <dbReference type="ChEBI" id="CHEBI:37565"/>
        <label>2</label>
    </ligand>
</feature>
<evidence type="ECO:0000255" key="1">
    <source>
        <dbReference type="HAMAP-Rule" id="MF_00195"/>
    </source>
</evidence>
<keyword id="KW-0342">GTP-binding</keyword>
<keyword id="KW-0547">Nucleotide-binding</keyword>
<keyword id="KW-0677">Repeat</keyword>
<keyword id="KW-0690">Ribosome biogenesis</keyword>
<organism>
    <name type="scientific">Chlamydia abortus (strain DSM 27085 / S26/3)</name>
    <name type="common">Chlamydophila abortus</name>
    <dbReference type="NCBI Taxonomy" id="218497"/>
    <lineage>
        <taxon>Bacteria</taxon>
        <taxon>Pseudomonadati</taxon>
        <taxon>Chlamydiota</taxon>
        <taxon>Chlamydiia</taxon>
        <taxon>Chlamydiales</taxon>
        <taxon>Chlamydiaceae</taxon>
        <taxon>Chlamydia/Chlamydophila group</taxon>
        <taxon>Chlamydia</taxon>
    </lineage>
</organism>
<protein>
    <recommendedName>
        <fullName evidence="1">GTPase Der</fullName>
    </recommendedName>
    <alternativeName>
        <fullName evidence="1">GTP-binding protein EngA</fullName>
    </alternativeName>
</protein>
<accession>Q5L4W4</accession>
<sequence length="474" mass="53878">MLRIAILGRPNVGKSSLFNRMCKRSLAIVNSQEGTTRDRLYGEIRGWGIPVQVIDTGGVDKDSEDHFQKHIYKQALAGANEADILLLVIDIRCGITELDAEIAKQLLYLKKPLILVANKADTLKDEYRVHELYKIGISEIVTVSASHDKHIDKLIHKIKTLANVPEVVEEPREEMHEEEVPGMEFPETKEFLSDDEDEDTAFSQSSVADKPLKIALIGRPNVGKSSIINALLNEERCIIDNVPGTTRDNIDILYSHNDRSYLFIDTAGLRKMKSVKNSIEWISSSRTEKAIARADICLLVIDATHHLSSYDKRILSLISKQKKPHIILVNKWDLIEGVRMEHYIRDLRATDMYIGQSKILCISAATKRNLRQIFSSIDELHTTVSSKVPTPVVNKTLALALQKHHPQVINGRRLRVYYAIHKTATPFQFLLFINAKSLLTKHYECYLKNTLKSAFNLYGVPFDLEFKEKTKRTN</sequence>
<name>DER_CHLAB</name>
<gene>
    <name evidence="1" type="primary">der</name>
    <name type="synonym">engA</name>
    <name type="ordered locus">CAB891</name>
</gene>
<dbReference type="EMBL" id="CR848038">
    <property type="protein sequence ID" value="CAH64331.1"/>
    <property type="molecule type" value="Genomic_DNA"/>
</dbReference>
<dbReference type="RefSeq" id="WP_011097404.1">
    <property type="nucleotide sequence ID" value="NC_004552.2"/>
</dbReference>
<dbReference type="SMR" id="Q5L4W4"/>
<dbReference type="KEGG" id="cab:CAB891"/>
<dbReference type="eggNOG" id="COG1160">
    <property type="taxonomic scope" value="Bacteria"/>
</dbReference>
<dbReference type="HOGENOM" id="CLU_016077_6_2_0"/>
<dbReference type="OrthoDB" id="9805918at2"/>
<dbReference type="Proteomes" id="UP000001012">
    <property type="component" value="Chromosome"/>
</dbReference>
<dbReference type="GO" id="GO:0005525">
    <property type="term" value="F:GTP binding"/>
    <property type="evidence" value="ECO:0007669"/>
    <property type="project" value="UniProtKB-UniRule"/>
</dbReference>
<dbReference type="GO" id="GO:0043022">
    <property type="term" value="F:ribosome binding"/>
    <property type="evidence" value="ECO:0007669"/>
    <property type="project" value="TreeGrafter"/>
</dbReference>
<dbReference type="GO" id="GO:0042254">
    <property type="term" value="P:ribosome biogenesis"/>
    <property type="evidence" value="ECO:0007669"/>
    <property type="project" value="UniProtKB-KW"/>
</dbReference>
<dbReference type="CDD" id="cd01894">
    <property type="entry name" value="EngA1"/>
    <property type="match status" value="1"/>
</dbReference>
<dbReference type="CDD" id="cd01895">
    <property type="entry name" value="EngA2"/>
    <property type="match status" value="1"/>
</dbReference>
<dbReference type="FunFam" id="3.40.50.300:FF:000040">
    <property type="entry name" value="GTPase Der"/>
    <property type="match status" value="1"/>
</dbReference>
<dbReference type="FunFam" id="3.40.50.300:FF:000494">
    <property type="entry name" value="tRNA modification GTPase MnmE"/>
    <property type="match status" value="1"/>
</dbReference>
<dbReference type="Gene3D" id="3.30.300.20">
    <property type="match status" value="1"/>
</dbReference>
<dbReference type="Gene3D" id="3.40.50.300">
    <property type="entry name" value="P-loop containing nucleotide triphosphate hydrolases"/>
    <property type="match status" value="2"/>
</dbReference>
<dbReference type="HAMAP" id="MF_00195">
    <property type="entry name" value="GTPase_Der"/>
    <property type="match status" value="1"/>
</dbReference>
<dbReference type="InterPro" id="IPR031166">
    <property type="entry name" value="G_ENGA"/>
</dbReference>
<dbReference type="InterPro" id="IPR006073">
    <property type="entry name" value="GTP-bd"/>
</dbReference>
<dbReference type="InterPro" id="IPR016484">
    <property type="entry name" value="GTPase_Der"/>
</dbReference>
<dbReference type="InterPro" id="IPR032859">
    <property type="entry name" value="KH_dom-like"/>
</dbReference>
<dbReference type="InterPro" id="IPR015946">
    <property type="entry name" value="KH_dom-like_a/b"/>
</dbReference>
<dbReference type="InterPro" id="IPR027417">
    <property type="entry name" value="P-loop_NTPase"/>
</dbReference>
<dbReference type="InterPro" id="IPR005225">
    <property type="entry name" value="Small_GTP-bd"/>
</dbReference>
<dbReference type="NCBIfam" id="TIGR03594">
    <property type="entry name" value="GTPase_EngA"/>
    <property type="match status" value="1"/>
</dbReference>
<dbReference type="NCBIfam" id="TIGR00231">
    <property type="entry name" value="small_GTP"/>
    <property type="match status" value="2"/>
</dbReference>
<dbReference type="PANTHER" id="PTHR43834">
    <property type="entry name" value="GTPASE DER"/>
    <property type="match status" value="1"/>
</dbReference>
<dbReference type="PANTHER" id="PTHR43834:SF6">
    <property type="entry name" value="GTPASE DER"/>
    <property type="match status" value="1"/>
</dbReference>
<dbReference type="Pfam" id="PF14714">
    <property type="entry name" value="KH_dom-like"/>
    <property type="match status" value="1"/>
</dbReference>
<dbReference type="Pfam" id="PF01926">
    <property type="entry name" value="MMR_HSR1"/>
    <property type="match status" value="2"/>
</dbReference>
<dbReference type="PIRSF" id="PIRSF006485">
    <property type="entry name" value="GTP-binding_EngA"/>
    <property type="match status" value="1"/>
</dbReference>
<dbReference type="PRINTS" id="PR00326">
    <property type="entry name" value="GTP1OBG"/>
</dbReference>
<dbReference type="SUPFAM" id="SSF52540">
    <property type="entry name" value="P-loop containing nucleoside triphosphate hydrolases"/>
    <property type="match status" value="2"/>
</dbReference>
<dbReference type="PROSITE" id="PS51712">
    <property type="entry name" value="G_ENGA"/>
    <property type="match status" value="2"/>
</dbReference>
<comment type="function">
    <text evidence="1">GTPase that plays an essential role in the late steps of ribosome biogenesis.</text>
</comment>
<comment type="subunit">
    <text evidence="1">Associates with the 50S ribosomal subunit.</text>
</comment>
<comment type="similarity">
    <text evidence="1">Belongs to the TRAFAC class TrmE-Era-EngA-EngB-Septin-like GTPase superfamily. EngA (Der) GTPase family.</text>
</comment>